<comment type="function">
    <text evidence="1">Binds to the 23S rRNA.</text>
</comment>
<comment type="subunit">
    <text evidence="1">Part of the 50S ribosomal subunit.</text>
</comment>
<comment type="similarity">
    <text evidence="1">Belongs to the universal ribosomal protein uL15 family.</text>
</comment>
<organism>
    <name type="scientific">Salmonella schwarzengrund (strain CVM19633)</name>
    <dbReference type="NCBI Taxonomy" id="439843"/>
    <lineage>
        <taxon>Bacteria</taxon>
        <taxon>Pseudomonadati</taxon>
        <taxon>Pseudomonadota</taxon>
        <taxon>Gammaproteobacteria</taxon>
        <taxon>Enterobacterales</taxon>
        <taxon>Enterobacteriaceae</taxon>
        <taxon>Salmonella</taxon>
    </lineage>
</organism>
<protein>
    <recommendedName>
        <fullName evidence="1">Large ribosomal subunit protein uL15</fullName>
    </recommendedName>
    <alternativeName>
        <fullName evidence="3">50S ribosomal protein L15</fullName>
    </alternativeName>
</protein>
<accession>B4TXC3</accession>
<sequence length="144" mass="14966">MRLNTLSPAEGSKKAGKRLGRGIGSGLGKTGGRGHKGQKSRSGGGVRRGFEGGQMPLYRRLPKFGFTSRKAAITAEVRLSDLAKVEGGVVDLNTLKAANIIGIQIEFAKVILAGEVTTPVTVRGLRVTKGARAAIEAAGGKIEE</sequence>
<feature type="chain" id="PRO_1000142879" description="Large ribosomal subunit protein uL15">
    <location>
        <begin position="1"/>
        <end position="144"/>
    </location>
</feature>
<feature type="region of interest" description="Disordered" evidence="2">
    <location>
        <begin position="1"/>
        <end position="54"/>
    </location>
</feature>
<feature type="compositionally biased region" description="Gly residues" evidence="2">
    <location>
        <begin position="21"/>
        <end position="31"/>
    </location>
</feature>
<name>RL15_SALSV</name>
<keyword id="KW-0687">Ribonucleoprotein</keyword>
<keyword id="KW-0689">Ribosomal protein</keyword>
<keyword id="KW-0694">RNA-binding</keyword>
<keyword id="KW-0699">rRNA-binding</keyword>
<reference key="1">
    <citation type="journal article" date="2011" name="J. Bacteriol.">
        <title>Comparative genomics of 28 Salmonella enterica isolates: evidence for CRISPR-mediated adaptive sublineage evolution.</title>
        <authorList>
            <person name="Fricke W.F."/>
            <person name="Mammel M.K."/>
            <person name="McDermott P.F."/>
            <person name="Tartera C."/>
            <person name="White D.G."/>
            <person name="Leclerc J.E."/>
            <person name="Ravel J."/>
            <person name="Cebula T.A."/>
        </authorList>
    </citation>
    <scope>NUCLEOTIDE SEQUENCE [LARGE SCALE GENOMIC DNA]</scope>
    <source>
        <strain>CVM19633</strain>
    </source>
</reference>
<evidence type="ECO:0000255" key="1">
    <source>
        <dbReference type="HAMAP-Rule" id="MF_01341"/>
    </source>
</evidence>
<evidence type="ECO:0000256" key="2">
    <source>
        <dbReference type="SAM" id="MobiDB-lite"/>
    </source>
</evidence>
<evidence type="ECO:0000305" key="3"/>
<gene>
    <name evidence="1" type="primary">rplO</name>
    <name type="ordered locus">SeSA_A3617</name>
</gene>
<proteinExistence type="inferred from homology"/>
<dbReference type="EMBL" id="CP001127">
    <property type="protein sequence ID" value="ACF91967.1"/>
    <property type="molecule type" value="Genomic_DNA"/>
</dbReference>
<dbReference type="RefSeq" id="WP_001238917.1">
    <property type="nucleotide sequence ID" value="NC_011094.1"/>
</dbReference>
<dbReference type="SMR" id="B4TXC3"/>
<dbReference type="GeneID" id="93778686"/>
<dbReference type="KEGG" id="sew:SeSA_A3617"/>
<dbReference type="HOGENOM" id="CLU_055188_4_2_6"/>
<dbReference type="Proteomes" id="UP000001865">
    <property type="component" value="Chromosome"/>
</dbReference>
<dbReference type="GO" id="GO:0022625">
    <property type="term" value="C:cytosolic large ribosomal subunit"/>
    <property type="evidence" value="ECO:0007669"/>
    <property type="project" value="TreeGrafter"/>
</dbReference>
<dbReference type="GO" id="GO:0019843">
    <property type="term" value="F:rRNA binding"/>
    <property type="evidence" value="ECO:0007669"/>
    <property type="project" value="UniProtKB-UniRule"/>
</dbReference>
<dbReference type="GO" id="GO:0003735">
    <property type="term" value="F:structural constituent of ribosome"/>
    <property type="evidence" value="ECO:0007669"/>
    <property type="project" value="InterPro"/>
</dbReference>
<dbReference type="GO" id="GO:0006412">
    <property type="term" value="P:translation"/>
    <property type="evidence" value="ECO:0007669"/>
    <property type="project" value="UniProtKB-UniRule"/>
</dbReference>
<dbReference type="FunFam" id="3.100.10.10:FF:000003">
    <property type="entry name" value="50S ribosomal protein L15"/>
    <property type="match status" value="1"/>
</dbReference>
<dbReference type="Gene3D" id="3.100.10.10">
    <property type="match status" value="1"/>
</dbReference>
<dbReference type="HAMAP" id="MF_01341">
    <property type="entry name" value="Ribosomal_uL15"/>
    <property type="match status" value="1"/>
</dbReference>
<dbReference type="InterPro" id="IPR030878">
    <property type="entry name" value="Ribosomal_uL15"/>
</dbReference>
<dbReference type="InterPro" id="IPR021131">
    <property type="entry name" value="Ribosomal_uL15/eL18"/>
</dbReference>
<dbReference type="InterPro" id="IPR036227">
    <property type="entry name" value="Ribosomal_uL15/eL18_sf"/>
</dbReference>
<dbReference type="InterPro" id="IPR005749">
    <property type="entry name" value="Ribosomal_uL15_bac-type"/>
</dbReference>
<dbReference type="InterPro" id="IPR001196">
    <property type="entry name" value="Ribosomal_uL15_CS"/>
</dbReference>
<dbReference type="NCBIfam" id="TIGR01071">
    <property type="entry name" value="rplO_bact"/>
    <property type="match status" value="1"/>
</dbReference>
<dbReference type="PANTHER" id="PTHR12934">
    <property type="entry name" value="50S RIBOSOMAL PROTEIN L15"/>
    <property type="match status" value="1"/>
</dbReference>
<dbReference type="PANTHER" id="PTHR12934:SF11">
    <property type="entry name" value="LARGE RIBOSOMAL SUBUNIT PROTEIN UL15M"/>
    <property type="match status" value="1"/>
</dbReference>
<dbReference type="Pfam" id="PF00828">
    <property type="entry name" value="Ribosomal_L27A"/>
    <property type="match status" value="1"/>
</dbReference>
<dbReference type="SUPFAM" id="SSF52080">
    <property type="entry name" value="Ribosomal proteins L15p and L18e"/>
    <property type="match status" value="1"/>
</dbReference>
<dbReference type="PROSITE" id="PS00475">
    <property type="entry name" value="RIBOSOMAL_L15"/>
    <property type="match status" value="1"/>
</dbReference>